<proteinExistence type="inferred from homology"/>
<sequence length="267" mass="29625">MTQVSMRDLFEAGAHFGHRARFWNPKMAPYIYGKRGDIHIINLEQTVPMLNDALNFLSAVVGNGGRVMFVGTKRSASDAISEAASRCGMPYVNFRWLGGMMTNFKTIRQSIRRLEEIEKMAEDGTYDKLSKKEVIVLEREREKLARALTGIRSMKHLPDVLFVVDVGHERIAIQEAMKLGIPVVGVVDTNNDIEGVDYIIPGNDDSVRAIRLYVNAAADTIEHAKAAAAVRGGDNAEEELAEAISQEEPSAAEELPDDMADNENEFE</sequence>
<dbReference type="EMBL" id="CP000513">
    <property type="protein sequence ID" value="ABQ13404.1"/>
    <property type="molecule type" value="Genomic_DNA"/>
</dbReference>
<dbReference type="RefSeq" id="WP_012031055.1">
    <property type="nucleotide sequence ID" value="NC_009446.1"/>
</dbReference>
<dbReference type="SMR" id="A5EV13"/>
<dbReference type="STRING" id="246195.DNO_0723"/>
<dbReference type="KEGG" id="dno:DNO_0723"/>
<dbReference type="eggNOG" id="COG0052">
    <property type="taxonomic scope" value="Bacteria"/>
</dbReference>
<dbReference type="HOGENOM" id="CLU_040318_2_1_6"/>
<dbReference type="OrthoDB" id="9808036at2"/>
<dbReference type="Proteomes" id="UP000000248">
    <property type="component" value="Chromosome"/>
</dbReference>
<dbReference type="GO" id="GO:0022627">
    <property type="term" value="C:cytosolic small ribosomal subunit"/>
    <property type="evidence" value="ECO:0007669"/>
    <property type="project" value="TreeGrafter"/>
</dbReference>
<dbReference type="GO" id="GO:0003735">
    <property type="term" value="F:structural constituent of ribosome"/>
    <property type="evidence" value="ECO:0007669"/>
    <property type="project" value="InterPro"/>
</dbReference>
<dbReference type="GO" id="GO:0006412">
    <property type="term" value="P:translation"/>
    <property type="evidence" value="ECO:0007669"/>
    <property type="project" value="UniProtKB-UniRule"/>
</dbReference>
<dbReference type="CDD" id="cd01425">
    <property type="entry name" value="RPS2"/>
    <property type="match status" value="1"/>
</dbReference>
<dbReference type="FunFam" id="1.10.287.610:FF:000001">
    <property type="entry name" value="30S ribosomal protein S2"/>
    <property type="match status" value="1"/>
</dbReference>
<dbReference type="Gene3D" id="3.40.50.10490">
    <property type="entry name" value="Glucose-6-phosphate isomerase like protein, domain 1"/>
    <property type="match status" value="1"/>
</dbReference>
<dbReference type="Gene3D" id="1.10.287.610">
    <property type="entry name" value="Helix hairpin bin"/>
    <property type="match status" value="1"/>
</dbReference>
<dbReference type="HAMAP" id="MF_00291_B">
    <property type="entry name" value="Ribosomal_uS2_B"/>
    <property type="match status" value="1"/>
</dbReference>
<dbReference type="InterPro" id="IPR001865">
    <property type="entry name" value="Ribosomal_uS2"/>
</dbReference>
<dbReference type="InterPro" id="IPR005706">
    <property type="entry name" value="Ribosomal_uS2_bac/mit/plastid"/>
</dbReference>
<dbReference type="InterPro" id="IPR018130">
    <property type="entry name" value="Ribosomal_uS2_CS"/>
</dbReference>
<dbReference type="InterPro" id="IPR023591">
    <property type="entry name" value="Ribosomal_uS2_flav_dom_sf"/>
</dbReference>
<dbReference type="NCBIfam" id="TIGR01011">
    <property type="entry name" value="rpsB_bact"/>
    <property type="match status" value="1"/>
</dbReference>
<dbReference type="PANTHER" id="PTHR12534">
    <property type="entry name" value="30S RIBOSOMAL PROTEIN S2 PROKARYOTIC AND ORGANELLAR"/>
    <property type="match status" value="1"/>
</dbReference>
<dbReference type="PANTHER" id="PTHR12534:SF0">
    <property type="entry name" value="SMALL RIBOSOMAL SUBUNIT PROTEIN US2M"/>
    <property type="match status" value="1"/>
</dbReference>
<dbReference type="Pfam" id="PF00318">
    <property type="entry name" value="Ribosomal_S2"/>
    <property type="match status" value="1"/>
</dbReference>
<dbReference type="PRINTS" id="PR00395">
    <property type="entry name" value="RIBOSOMALS2"/>
</dbReference>
<dbReference type="SUPFAM" id="SSF52313">
    <property type="entry name" value="Ribosomal protein S2"/>
    <property type="match status" value="1"/>
</dbReference>
<dbReference type="PROSITE" id="PS00962">
    <property type="entry name" value="RIBOSOMAL_S2_1"/>
    <property type="match status" value="1"/>
</dbReference>
<dbReference type="PROSITE" id="PS00963">
    <property type="entry name" value="RIBOSOMAL_S2_2"/>
    <property type="match status" value="1"/>
</dbReference>
<gene>
    <name evidence="1" type="primary">rpsB</name>
    <name type="ordered locus">DNO_0723</name>
</gene>
<reference key="1">
    <citation type="journal article" date="2007" name="Nat. Biotechnol.">
        <title>Genome sequence and identification of candidate vaccine antigens from the animal pathogen Dichelobacter nodosus.</title>
        <authorList>
            <person name="Myers G.S.A."/>
            <person name="Parker D."/>
            <person name="Al-Hasani K."/>
            <person name="Kennan R.M."/>
            <person name="Seemann T."/>
            <person name="Ren Q."/>
            <person name="Badger J.H."/>
            <person name="Selengut J.D."/>
            <person name="Deboy R.T."/>
            <person name="Tettelin H."/>
            <person name="Boyce J.D."/>
            <person name="McCarl V.P."/>
            <person name="Han X."/>
            <person name="Nelson W.C."/>
            <person name="Madupu R."/>
            <person name="Mohamoud Y."/>
            <person name="Holley T."/>
            <person name="Fedorova N."/>
            <person name="Khouri H."/>
            <person name="Bottomley S.P."/>
            <person name="Whittington R.J."/>
            <person name="Adler B."/>
            <person name="Songer J.G."/>
            <person name="Rood J.I."/>
            <person name="Paulsen I.T."/>
        </authorList>
    </citation>
    <scope>NUCLEOTIDE SEQUENCE [LARGE SCALE GENOMIC DNA]</scope>
    <source>
        <strain>VCS1703A</strain>
    </source>
</reference>
<keyword id="KW-1185">Reference proteome</keyword>
<keyword id="KW-0687">Ribonucleoprotein</keyword>
<keyword id="KW-0689">Ribosomal protein</keyword>
<feature type="chain" id="PRO_1000003952" description="Small ribosomal subunit protein uS2">
    <location>
        <begin position="1"/>
        <end position="267"/>
    </location>
</feature>
<feature type="region of interest" description="Disordered" evidence="2">
    <location>
        <begin position="234"/>
        <end position="267"/>
    </location>
</feature>
<feature type="compositionally biased region" description="Acidic residues" evidence="2">
    <location>
        <begin position="250"/>
        <end position="267"/>
    </location>
</feature>
<protein>
    <recommendedName>
        <fullName evidence="1">Small ribosomal subunit protein uS2</fullName>
    </recommendedName>
    <alternativeName>
        <fullName evidence="3">30S ribosomal protein S2</fullName>
    </alternativeName>
</protein>
<evidence type="ECO:0000255" key="1">
    <source>
        <dbReference type="HAMAP-Rule" id="MF_00291"/>
    </source>
</evidence>
<evidence type="ECO:0000256" key="2">
    <source>
        <dbReference type="SAM" id="MobiDB-lite"/>
    </source>
</evidence>
<evidence type="ECO:0000305" key="3"/>
<accession>A5EV13</accession>
<organism>
    <name type="scientific">Dichelobacter nodosus (strain VCS1703A)</name>
    <dbReference type="NCBI Taxonomy" id="246195"/>
    <lineage>
        <taxon>Bacteria</taxon>
        <taxon>Pseudomonadati</taxon>
        <taxon>Pseudomonadota</taxon>
        <taxon>Gammaproteobacteria</taxon>
        <taxon>Cardiobacteriales</taxon>
        <taxon>Cardiobacteriaceae</taxon>
        <taxon>Dichelobacter</taxon>
    </lineage>
</organism>
<name>RS2_DICNV</name>
<comment type="similarity">
    <text evidence="1">Belongs to the universal ribosomal protein uS2 family.</text>
</comment>